<organismHost>
    <name type="scientific">Homo sapiens</name>
    <name type="common">Human</name>
    <dbReference type="NCBI Taxonomy" id="9606"/>
</organismHost>
<reference key="1">
    <citation type="journal article" date="2000" name="AIDS Res. Hum. Retroviruses">
        <title>Near-full-length genome sequencing of divergent African HIV type 1 subtype F viruses leads to the identification of a new HIV type 1 subtype designated K.</title>
        <authorList>
            <person name="Triques K."/>
            <person name="Bourgeois A."/>
            <person name="Vidale N."/>
            <person name="Mpoudi-Ngole E."/>
            <person name="Mulanga-Kabeya C."/>
            <person name="Nzilambi N."/>
            <person name="Torimiro N."/>
            <person name="Saman E."/>
            <person name="Delaporte E."/>
            <person name="Peeters M."/>
        </authorList>
    </citation>
    <scope>NUCLEOTIDE SEQUENCE [GENOMIC RNA]</scope>
</reference>
<reference key="2">
    <citation type="journal article" date="2005" name="Microbes Infect.">
        <title>Decoding Tat: the biology of HIV Tat posttranslational modifications.</title>
        <authorList>
            <person name="Hetzer C."/>
            <person name="Dormeyer W."/>
            <person name="Schnolzer M."/>
            <person name="Ott M."/>
        </authorList>
    </citation>
    <scope>REVIEW</scope>
    <scope>ALTERNATIVE SPLICING</scope>
</reference>
<reference key="3">
    <citation type="journal article" date="2006" name="Front. Biosci.">
        <title>The multiple functions of HIV-1 Tat: proliferation versus apoptosis.</title>
        <authorList>
            <person name="Peruzzi F."/>
        </authorList>
    </citation>
    <scope>REVIEW</scope>
</reference>
<reference key="4">
    <citation type="journal article" date="2006" name="Microbes Infect.">
        <title>HIV tat and neurotoxicity.</title>
        <authorList>
            <person name="King J.E."/>
            <person name="Eugenin E.A."/>
            <person name="Buckner C.M."/>
            <person name="Berman J.W."/>
        </authorList>
    </citation>
    <scope>REVIEW</scope>
</reference>
<protein>
    <recommendedName>
        <fullName evidence="1">Protein Tat</fullName>
    </recommendedName>
    <alternativeName>
        <fullName evidence="1">Transactivating regulatory protein</fullName>
    </alternativeName>
</protein>
<keyword id="KW-0007">Acetylation</keyword>
<keyword id="KW-0010">Activator</keyword>
<keyword id="KW-0014">AIDS</keyword>
<keyword id="KW-0025">Alternative splicing</keyword>
<keyword id="KW-0053">Apoptosis</keyword>
<keyword id="KW-1035">Host cytoplasm</keyword>
<keyword id="KW-1048">Host nucleus</keyword>
<keyword id="KW-0945">Host-virus interaction</keyword>
<keyword id="KW-1090">Inhibition of host innate immune response by virus</keyword>
<keyword id="KW-1114">Inhibition of host interferon signaling pathway by virus</keyword>
<keyword id="KW-0922">Interferon antiviral system evasion</keyword>
<keyword id="KW-1017">Isopeptide bond</keyword>
<keyword id="KW-0479">Metal-binding</keyword>
<keyword id="KW-0488">Methylation</keyword>
<keyword id="KW-1122">Modulation of host chromatin by virus</keyword>
<keyword id="KW-1126">Modulation of host PP1 activity by virus</keyword>
<keyword id="KW-0597">Phosphoprotein</keyword>
<keyword id="KW-0694">RNA-binding</keyword>
<keyword id="KW-0964">Secreted</keyword>
<keyword id="KW-0804">Transcription</keyword>
<keyword id="KW-0805">Transcription regulation</keyword>
<keyword id="KW-0832">Ubl conjugation</keyword>
<keyword id="KW-0899">Viral immunoevasion</keyword>
<keyword id="KW-0862">Zinc</keyword>
<sequence length="99" mass="11263">MEPVDPNIEPWNQPGSQPKTACNQCYCKKCCYHCQLCFLQKGLGICYGREKRRQRTTTPYASKNHKDPIPKQPLPQARGDPTGPKESKKEVESKTKTDP</sequence>
<organism>
    <name type="scientific">Human immunodeficiency virus type 1 group M subtype K (isolate 97ZR-EQTB11)</name>
    <name type="common">HIV-1</name>
    <dbReference type="NCBI Taxonomy" id="388907"/>
    <lineage>
        <taxon>Viruses</taxon>
        <taxon>Riboviria</taxon>
        <taxon>Pararnavirae</taxon>
        <taxon>Artverviricota</taxon>
        <taxon>Revtraviricetes</taxon>
        <taxon>Ortervirales</taxon>
        <taxon>Retroviridae</taxon>
        <taxon>Orthoretrovirinae</taxon>
        <taxon>Lentivirus</taxon>
        <taxon>Human immunodeficiency virus type 1</taxon>
    </lineage>
</organism>
<feature type="chain" id="PRO_0000244849" description="Protein Tat">
    <location>
        <begin position="1"/>
        <end position="99"/>
    </location>
</feature>
<feature type="region of interest" description="Transactivation" evidence="1">
    <location>
        <begin position="1"/>
        <end position="48"/>
    </location>
</feature>
<feature type="region of interest" description="Interaction with human CREBBP" evidence="1">
    <location>
        <begin position="1"/>
        <end position="24"/>
    </location>
</feature>
<feature type="region of interest" description="Disordered" evidence="2">
    <location>
        <begin position="1"/>
        <end position="20"/>
    </location>
</feature>
<feature type="region of interest" description="Cysteine-rich" evidence="1">
    <location>
        <begin position="22"/>
        <end position="37"/>
    </location>
</feature>
<feature type="region of interest" description="Core" evidence="1">
    <location>
        <begin position="38"/>
        <end position="48"/>
    </location>
</feature>
<feature type="region of interest" description="Interaction with the host capping enzyme RNGTT" evidence="1">
    <location>
        <begin position="49"/>
        <end position="86"/>
    </location>
</feature>
<feature type="region of interest" description="Disordered" evidence="2">
    <location>
        <begin position="54"/>
        <end position="99"/>
    </location>
</feature>
<feature type="short sequence motif" description="Nuclear localization signal, RNA-binding (TAR), and protein transduction" evidence="1">
    <location>
        <begin position="49"/>
        <end position="57"/>
    </location>
</feature>
<feature type="short sequence motif" description="Cell attachment site" evidence="1">
    <location>
        <begin position="78"/>
        <end position="80"/>
    </location>
</feature>
<feature type="compositionally biased region" description="Basic and acidic residues" evidence="2">
    <location>
        <begin position="83"/>
        <end position="99"/>
    </location>
</feature>
<feature type="binding site" evidence="1">
    <location>
        <position position="22"/>
    </location>
    <ligand>
        <name>Zn(2+)</name>
        <dbReference type="ChEBI" id="CHEBI:29105"/>
        <label>1</label>
    </ligand>
</feature>
<feature type="binding site" evidence="1">
    <location>
        <position position="25"/>
    </location>
    <ligand>
        <name>Zn(2+)</name>
        <dbReference type="ChEBI" id="CHEBI:29105"/>
        <label>2</label>
    </ligand>
</feature>
<feature type="binding site" evidence="1">
    <location>
        <position position="27"/>
    </location>
    <ligand>
        <name>Zn(2+)</name>
        <dbReference type="ChEBI" id="CHEBI:29105"/>
        <label>2</label>
    </ligand>
</feature>
<feature type="binding site" evidence="1">
    <location>
        <position position="30"/>
    </location>
    <ligand>
        <name>Zn(2+)</name>
        <dbReference type="ChEBI" id="CHEBI:29105"/>
        <label>2</label>
    </ligand>
</feature>
<feature type="binding site" evidence="1">
    <location>
        <position position="33"/>
    </location>
    <ligand>
        <name>Zn(2+)</name>
        <dbReference type="ChEBI" id="CHEBI:29105"/>
        <label>1</label>
    </ligand>
</feature>
<feature type="binding site" evidence="1">
    <location>
        <position position="34"/>
    </location>
    <ligand>
        <name>Zn(2+)</name>
        <dbReference type="ChEBI" id="CHEBI:29105"/>
        <label>1</label>
    </ligand>
</feature>
<feature type="binding site" evidence="1">
    <location>
        <position position="37"/>
    </location>
    <ligand>
        <name>Zn(2+)</name>
        <dbReference type="ChEBI" id="CHEBI:29105"/>
        <label>1</label>
    </ligand>
</feature>
<feature type="site" description="Essential for Tat translocation through the endosomal membrane" evidence="1">
    <location>
        <position position="11"/>
    </location>
</feature>
<feature type="modified residue" description="N6-acetyllysine; by host PCAF" evidence="1">
    <location>
        <position position="28"/>
    </location>
</feature>
<feature type="modified residue" description="N6-acetyllysine; by host EP300 and GCN5L2" evidence="1">
    <location>
        <position position="51"/>
    </location>
</feature>
<feature type="modified residue" description="Asymmetric dimethylarginine; by host PRMT6" evidence="1">
    <location>
        <position position="52"/>
    </location>
</feature>
<feature type="modified residue" description="Asymmetric dimethylarginine; by host PRMT6" evidence="1">
    <location>
        <position position="53"/>
    </location>
</feature>
<feature type="cross-link" description="Glycyl lysine isopeptide (Lys-Gly) (interchain with G-Cter in ubiquitin)" evidence="1">
    <location>
        <position position="71"/>
    </location>
</feature>
<feature type="splice variant" id="VSP_022404" description="In isoform Short.">
    <location>
        <begin position="73"/>
        <end position="99"/>
    </location>
</feature>
<accession>P0C1K3</accession>
<proteinExistence type="inferred from homology"/>
<name>TAT_HV197</name>
<evidence type="ECO:0000255" key="1">
    <source>
        <dbReference type="HAMAP-Rule" id="MF_04079"/>
    </source>
</evidence>
<evidence type="ECO:0000256" key="2">
    <source>
        <dbReference type="SAM" id="MobiDB-lite"/>
    </source>
</evidence>
<evidence type="ECO:0000305" key="3"/>
<dbReference type="EMBL" id="AJ249235">
    <property type="status" value="NOT_ANNOTATED_CDS"/>
    <property type="molecule type" value="Genomic_RNA"/>
</dbReference>
<dbReference type="SMR" id="P0C1K3"/>
<dbReference type="Proteomes" id="UP000100183">
    <property type="component" value="Segment"/>
</dbReference>
<dbReference type="GO" id="GO:0005576">
    <property type="term" value="C:extracellular region"/>
    <property type="evidence" value="ECO:0007669"/>
    <property type="project" value="UniProtKB-SubCell"/>
</dbReference>
<dbReference type="GO" id="GO:0030430">
    <property type="term" value="C:host cell cytoplasm"/>
    <property type="evidence" value="ECO:0007669"/>
    <property type="project" value="UniProtKB-SubCell"/>
</dbReference>
<dbReference type="GO" id="GO:0044196">
    <property type="term" value="C:host cell nucleolus"/>
    <property type="evidence" value="ECO:0007669"/>
    <property type="project" value="UniProtKB-SubCell"/>
</dbReference>
<dbReference type="GO" id="GO:0042805">
    <property type="term" value="F:actinin binding"/>
    <property type="evidence" value="ECO:0007669"/>
    <property type="project" value="UniProtKB-UniRule"/>
</dbReference>
<dbReference type="GO" id="GO:0030332">
    <property type="term" value="F:cyclin binding"/>
    <property type="evidence" value="ECO:0007669"/>
    <property type="project" value="UniProtKB-UniRule"/>
</dbReference>
<dbReference type="GO" id="GO:0046872">
    <property type="term" value="F:metal ion binding"/>
    <property type="evidence" value="ECO:0007669"/>
    <property type="project" value="UniProtKB-UniRule"/>
</dbReference>
<dbReference type="GO" id="GO:0019904">
    <property type="term" value="F:protein domain specific binding"/>
    <property type="evidence" value="ECO:0007669"/>
    <property type="project" value="UniProtKB-UniRule"/>
</dbReference>
<dbReference type="GO" id="GO:0004865">
    <property type="term" value="F:protein serine/threonine phosphatase inhibitor activity"/>
    <property type="evidence" value="ECO:0007669"/>
    <property type="project" value="UniProtKB-KW"/>
</dbReference>
<dbReference type="GO" id="GO:0001070">
    <property type="term" value="F:RNA-binding transcription regulator activity"/>
    <property type="evidence" value="ECO:0007669"/>
    <property type="project" value="UniProtKB-UniRule"/>
</dbReference>
<dbReference type="GO" id="GO:1990970">
    <property type="term" value="F:trans-activation response element binding"/>
    <property type="evidence" value="ECO:0007669"/>
    <property type="project" value="UniProtKB-UniRule"/>
</dbReference>
<dbReference type="GO" id="GO:0006351">
    <property type="term" value="P:DNA-templated transcription"/>
    <property type="evidence" value="ECO:0007669"/>
    <property type="project" value="UniProtKB-UniRule"/>
</dbReference>
<dbReference type="GO" id="GO:0032968">
    <property type="term" value="P:positive regulation of transcription elongation by RNA polymerase II"/>
    <property type="evidence" value="ECO:0007669"/>
    <property type="project" value="UniProtKB-UniRule"/>
</dbReference>
<dbReference type="GO" id="GO:0050434">
    <property type="term" value="P:positive regulation of viral transcription"/>
    <property type="evidence" value="ECO:0007669"/>
    <property type="project" value="UniProtKB-UniRule"/>
</dbReference>
<dbReference type="GO" id="GO:0039525">
    <property type="term" value="P:symbiont-mediated perturbation of host chromatin organization"/>
    <property type="evidence" value="ECO:0007669"/>
    <property type="project" value="UniProtKB-UniRule"/>
</dbReference>
<dbReference type="GO" id="GO:0052170">
    <property type="term" value="P:symbiont-mediated suppression of host innate immune response"/>
    <property type="evidence" value="ECO:0007669"/>
    <property type="project" value="UniProtKB-KW"/>
</dbReference>
<dbReference type="GO" id="GO:0039606">
    <property type="term" value="P:symbiont-mediated suppression of host translation initiation"/>
    <property type="evidence" value="ECO:0007669"/>
    <property type="project" value="UniProtKB-KW"/>
</dbReference>
<dbReference type="GO" id="GO:0039502">
    <property type="term" value="P:symbiont-mediated suppression of host type I interferon-mediated signaling pathway"/>
    <property type="evidence" value="ECO:0007669"/>
    <property type="project" value="UniProtKB-UniRule"/>
</dbReference>
<dbReference type="Gene3D" id="4.10.20.10">
    <property type="entry name" value="Tat domain"/>
    <property type="match status" value="1"/>
</dbReference>
<dbReference type="HAMAP" id="MF_04079">
    <property type="entry name" value="HIV_TAT"/>
    <property type="match status" value="1"/>
</dbReference>
<dbReference type="InterPro" id="IPR001831">
    <property type="entry name" value="IV_Tat"/>
</dbReference>
<dbReference type="InterPro" id="IPR036963">
    <property type="entry name" value="Tat_dom_sf"/>
</dbReference>
<dbReference type="Pfam" id="PF00539">
    <property type="entry name" value="Tat"/>
    <property type="match status" value="1"/>
</dbReference>
<dbReference type="PRINTS" id="PR00055">
    <property type="entry name" value="HIVTATDOMAIN"/>
</dbReference>
<gene>
    <name evidence="1" type="primary">tat</name>
</gene>
<comment type="function">
    <text evidence="1">Transcriptional activator that increases RNA Pol II processivity, thereby increasing the level of full-length viral transcripts. Recognizes a hairpin structure at the 5'-LTR of the nascent viral mRNAs referred to as the transactivation responsive RNA element (TAR) and recruits the cyclin T1-CDK9 complex (P-TEFb complex) that will in turn hyperphosphorylate the RNA polymerase II to allow efficient elongation. The CDK9 component of P-TEFb and other Tat-activated kinases hyperphosphorylate the C-terminus of RNA Pol II that becomes stabilized and much more processive. Other factors such as HTATSF1/Tat-SF1, SUPT5H/SPT5, and HTATIP2 are also important for Tat's function. Besides its effect on RNA Pol II processivity, Tat induces chromatin remodeling of proviral genes by recruiting the histone acetyltransferases (HATs) CREBBP, EP300 and PCAF to the chromatin. This also contributes to the increase in proviral transcription rate, especially when the provirus integrates in transcriptionally silent region of the host genome. To ensure maximal activation of the LTR, Tat mediates nuclear translocation of NF-kappa-B by interacting with host RELA. Through its interaction with host TBP, Tat may also modulate transcription initiation. Tat can reactivate a latently infected cell by penetrating in it and transactivating its LTR promoter. In the cytoplasm, Tat is thought to act as a translational activator of HIV-1 mRNAs.</text>
</comment>
<comment type="function">
    <text evidence="1">Extracellular circulating Tat can be endocytosed by surrounding uninfected cells via the binding to several surface receptors such as CD26, CXCR4, heparan sulfate proteoglycans (HSPG) or LDLR. Neurons are rarely infected, but they internalize Tat via their LDLR. Through its interaction with nuclear HATs, Tat is potentially able to control the acetylation-dependent cellular gene expression. Modulates the expression of many cellular genes involved in cell survival, proliferation or in coding for cytokines or cytokine receptors. Tat plays a role in T-cell and neurons apoptosis. Tat induced neurotoxicity and apoptosis probably contribute to neuroAIDS. Circulating Tat also acts as a chemokine-like and/or growth factor-like molecule that binds to specific receptors on the surface of the cells, affecting many cellular pathways. In the vascular system, Tat binds to ITGAV/ITGB3 and ITGA5/ITGB1 integrins dimers at the surface of endothelial cells and competes with bFGF for heparin-binding sites, leading to an excess of soluble bFGF.</text>
</comment>
<comment type="subunit">
    <text evidence="1">Interacts with host CCNT1. Associates with the P-TEFb complex composed at least of Tat, P-TEFb (CDK9 and CCNT1), TAR RNA, RNA Pol II. Recruits the HATs CREBBP, TAF1/TFIID, EP300, PCAF and GCN5L2. Interacts with host KAT5/Tip60; this interaction targets the latter to degradation. Interacts with the host deacetylase SIRT1. Interacts with host capping enzyme RNGTT; this interaction stimulates RNGTT. Binds to host KDR, and to the host integrins ITGAV/ITGB3 and ITGA5/ITGB1. Interacts with host KPNB1/importin beta-1 without previous binding to KPNA1/importin alpha-1. Interacts with EIF2AK2. Interacts with host nucleosome assembly protein NAP1L1; this interaction may be required for the transport of Tat within the nucleus, since the two proteins interact at the nuclear rim. Interacts with host C1QBP/SF2P32; this interaction involves lysine-acetylated Tat. Interacts with the host chemokine receptors CCR2, CCR3 and CXCR4. Interacts with host DPP4/CD26; this interaction may trigger an anti-proliferative effect. Interacts with host LDLR. Interacts with the host extracellular matrix metalloproteinase MMP1. Interacts with host PRMT6; this interaction mediates Tat's methylation. Interacts with, and is ubiquitinated by MDM2/Hdm2. Interacts with host PSMC3 and HTATIP2. Interacts with STAB1; this interaction may overcome SATB1-mediated repression of IL2 and IL2RA (interleukin) in T cells by binding to the same domain than HDAC1. Interacts (when acetylated) with human CDK13, thereby increasing HIV-1 mRNA splicing and promoting the production of the doubly spliced HIV-1 protein Nef. Interacts with host TBP; this interaction modulates the activity of transcriptional pre-initiation complex. Interacts with host RELA. Interacts with host PLSCR1; this interaction negatively regulates Tat transactivation activity by altering its subcellular distribution.</text>
</comment>
<comment type="subcellular location">
    <subcellularLocation>
        <location evidence="1">Host nucleus</location>
        <location evidence="1">Host nucleolus</location>
    </subcellularLocation>
    <subcellularLocation>
        <location evidence="1">Host cytoplasm</location>
    </subcellularLocation>
    <subcellularLocation>
        <location evidence="1">Secreted</location>
    </subcellularLocation>
    <text evidence="1">Probably localizes to both nuclear and nucleolar compartments. Nuclear localization is mediated through the interaction of the nuclear localization signal with importin KPNB1. Secretion occurs through a Golgi-independent pathway. Tat is released from infected cells to the extracellular space where it remains associated to the cell membrane, or is secreted into the cerebrospinal fluid and sera. Extracellular Tat can be endocytosed by surrounding uninfected cells via binding to several receptors depending on the cell type.</text>
</comment>
<comment type="alternative products">
    <event type="alternative splicing"/>
    <isoform>
        <id>P0C1K3-1</id>
        <name>Long</name>
        <sequence type="displayed"/>
    </isoform>
    <isoform>
        <id>P0C1K3-2</id>
        <name>Short</name>
        <sequence type="described" ref="VSP_022404"/>
    </isoform>
</comment>
<comment type="domain">
    <text evidence="1">The cell attachment site mediates the interaction with ITGAV/ITGB3 and ITGA5/ITGB1 integrins, leading to vascular cell migration and invasion. This interaction also provides endothelial cells with the adhesion signal they require to grow in response to mitogens.</text>
</comment>
<comment type="domain">
    <text evidence="1">The Cys-rich region may bind 2 zinc ions. This region is involved in binding to KAT5.</text>
</comment>
<comment type="domain">
    <text evidence="1">The transactivation domain mediates the interaction with CCNT1, GCN5L2, and MDM2.</text>
</comment>
<comment type="domain">
    <text evidence="1">The Arg-rich RNA-binding region binds the TAR RNA. This region also mediates the nuclear localization through direct binding to KPNB1 and is involved in Tat's transfer across cell membranes (protein transduction). The same region is required for the interaction with EP300, PCAF, EIF2AK2 and KDR.</text>
</comment>
<comment type="PTM">
    <text evidence="1">Asymmetrical arginine methylation by host PRMT6 seems to diminish the transactivation capacity of Tat and affects the interaction with host CCNT1.</text>
</comment>
<comment type="PTM">
    <text evidence="1">Acetylation by EP300, CREBBP, GCN5L2/GCN5 and PCAF regulates the transactivation activity of Tat. EP300-mediated acetylation of Lys-50 promotes dissociation of Tat from the TAR RNA through the competitive binding to PCAF's bromodomain. In addition, the non-acetylated Tat's N-terminus can also interact with PCAF. PCAF-mediated acetylation of Lys-28 enhances Tat's binding to CCNT1. Lys-50 is deacetylated by SIRT1.</text>
</comment>
<comment type="PTM">
    <text evidence="1">Polyubiquitination by host MDM2 does not target Tat to degradation, but activates its transactivation function and fosters interaction with CCNT1 and TAR RNA.</text>
</comment>
<comment type="PTM">
    <text evidence="1">Phosphorylated by EIF2AK2 on serine and threonine residues adjacent to the basic region important for TAR RNA binding and function. Phosphorylation of Tat by EIF2AK2 is dependent on the prior activation of EIF2AK2 by dsRNA.</text>
</comment>
<comment type="miscellaneous">
    <text evidence="1">HIV-1 lineages are divided in three main groups, M (for Major), O (for Outlier), and N (for New, or Non-M, Non-O). The vast majority of strains found worldwide belong to the group M. Group O seems to be endemic to and largely confined to Cameroon and neighboring countries in West Central Africa, where these viruses represent a small minority of HIV-1 strains. The group N is represented by a limited number of isolates from Cameroonian persons. The group M is further subdivided in 9 clades or subtypes (A to D, F to H, J and K).</text>
</comment>
<comment type="miscellaneous">
    <molecule>Isoform Short</molecule>
    <text evidence="3">Expressed in the late stage of the infection cycle, when unspliced viral RNAs are exported to the cytoplasm by the viral Rev protein.</text>
</comment>
<comment type="similarity">
    <text evidence="1">Belongs to the lentiviruses Tat family.</text>
</comment>